<feature type="chain" id="PRO_0000367581" description="Putative actin-fragmin kinase DDB_G0268812">
    <location>
        <begin position="1"/>
        <end position="409"/>
    </location>
</feature>
<feature type="region of interest" description="Disordered" evidence="2">
    <location>
        <begin position="1"/>
        <end position="45"/>
    </location>
</feature>
<feature type="coiled-coil region" evidence="1">
    <location>
        <begin position="5"/>
        <end position="46"/>
    </location>
</feature>
<feature type="compositionally biased region" description="Low complexity" evidence="2">
    <location>
        <begin position="13"/>
        <end position="45"/>
    </location>
</feature>
<accession>Q55EN5</accession>
<organism>
    <name type="scientific">Dictyostelium discoideum</name>
    <name type="common">Social amoeba</name>
    <dbReference type="NCBI Taxonomy" id="44689"/>
    <lineage>
        <taxon>Eukaryota</taxon>
        <taxon>Amoebozoa</taxon>
        <taxon>Evosea</taxon>
        <taxon>Eumycetozoa</taxon>
        <taxon>Dictyostelia</taxon>
        <taxon>Dictyosteliales</taxon>
        <taxon>Dictyosteliaceae</taxon>
        <taxon>Dictyostelium</taxon>
    </lineage>
</organism>
<name>Y8812_DICDI</name>
<proteinExistence type="inferred from homology"/>
<dbReference type="EMBL" id="AAFI02000004">
    <property type="protein sequence ID" value="EAL72995.1"/>
    <property type="molecule type" value="Genomic_DNA"/>
</dbReference>
<dbReference type="RefSeq" id="XP_646985.1">
    <property type="nucleotide sequence ID" value="XM_641893.1"/>
</dbReference>
<dbReference type="SMR" id="Q55EN5"/>
<dbReference type="FunCoup" id="Q55EN5">
    <property type="interactions" value="3"/>
</dbReference>
<dbReference type="PaxDb" id="44689-DDB0233254"/>
<dbReference type="EnsemblProtists" id="EAL72995">
    <property type="protein sequence ID" value="EAL72995"/>
    <property type="gene ID" value="DDB_G0268812"/>
</dbReference>
<dbReference type="GeneID" id="8616676"/>
<dbReference type="KEGG" id="ddi:DDB_G0268812"/>
<dbReference type="dictyBase" id="DDB_G0268812"/>
<dbReference type="VEuPathDB" id="AmoebaDB:DDB_G0268812"/>
<dbReference type="eggNOG" id="ENOG502RDNC">
    <property type="taxonomic scope" value="Eukaryota"/>
</dbReference>
<dbReference type="HOGENOM" id="CLU_054301_0_0_1"/>
<dbReference type="InParanoid" id="Q55EN5"/>
<dbReference type="PhylomeDB" id="Q55EN5"/>
<dbReference type="PRO" id="PR:Q55EN5"/>
<dbReference type="Proteomes" id="UP000002195">
    <property type="component" value="Chromosome 1"/>
</dbReference>
<dbReference type="GO" id="GO:0016301">
    <property type="term" value="F:kinase activity"/>
    <property type="evidence" value="ECO:0007669"/>
    <property type="project" value="UniProtKB-KW"/>
</dbReference>
<dbReference type="CDD" id="cd05124">
    <property type="entry name" value="AFK"/>
    <property type="match status" value="1"/>
</dbReference>
<dbReference type="Gene3D" id="1.10.1070.11">
    <property type="entry name" value="Phosphatidylinositol 3-/4-kinase, catalytic domain"/>
    <property type="match status" value="1"/>
</dbReference>
<dbReference type="Gene3D" id="3.30.1010.10">
    <property type="entry name" value="Phosphatidylinositol 3-kinase Catalytic Subunit, Chain A, domain 4"/>
    <property type="match status" value="1"/>
</dbReference>
<dbReference type="InterPro" id="IPR015275">
    <property type="entry name" value="Actin-fragmin_kin_cat_dom"/>
</dbReference>
<dbReference type="InterPro" id="IPR011009">
    <property type="entry name" value="Kinase-like_dom_sf"/>
</dbReference>
<dbReference type="InterPro" id="IPR036940">
    <property type="entry name" value="PI3/4_kinase_cat_sf"/>
</dbReference>
<dbReference type="InterPro" id="IPR037469">
    <property type="entry name" value="Put_AFK"/>
</dbReference>
<dbReference type="PANTHER" id="PTHR38737:SF2">
    <property type="entry name" value="ACTIN-FRAGMIN KINASE DDB_G0268748-RELATED"/>
    <property type="match status" value="1"/>
</dbReference>
<dbReference type="PANTHER" id="PTHR38737">
    <property type="entry name" value="ACTIN-FRAGMIN KINASE DDB_G0279609-RELATED"/>
    <property type="match status" value="1"/>
</dbReference>
<dbReference type="Pfam" id="PF09192">
    <property type="entry name" value="Act-Frag_cataly"/>
    <property type="match status" value="1"/>
</dbReference>
<dbReference type="SUPFAM" id="SSF56112">
    <property type="entry name" value="Protein kinase-like (PK-like)"/>
    <property type="match status" value="1"/>
</dbReference>
<keyword id="KW-0175">Coiled coil</keyword>
<keyword id="KW-0418">Kinase</keyword>
<keyword id="KW-1185">Reference proteome</keyword>
<keyword id="KW-0808">Transferase</keyword>
<reference key="1">
    <citation type="journal article" date="2005" name="Nature">
        <title>The genome of the social amoeba Dictyostelium discoideum.</title>
        <authorList>
            <person name="Eichinger L."/>
            <person name="Pachebat J.A."/>
            <person name="Gloeckner G."/>
            <person name="Rajandream M.A."/>
            <person name="Sucgang R."/>
            <person name="Berriman M."/>
            <person name="Song J."/>
            <person name="Olsen R."/>
            <person name="Szafranski K."/>
            <person name="Xu Q."/>
            <person name="Tunggal B."/>
            <person name="Kummerfeld S."/>
            <person name="Madera M."/>
            <person name="Konfortov B.A."/>
            <person name="Rivero F."/>
            <person name="Bankier A.T."/>
            <person name="Lehmann R."/>
            <person name="Hamlin N."/>
            <person name="Davies R."/>
            <person name="Gaudet P."/>
            <person name="Fey P."/>
            <person name="Pilcher K."/>
            <person name="Chen G."/>
            <person name="Saunders D."/>
            <person name="Sodergren E.J."/>
            <person name="Davis P."/>
            <person name="Kerhornou A."/>
            <person name="Nie X."/>
            <person name="Hall N."/>
            <person name="Anjard C."/>
            <person name="Hemphill L."/>
            <person name="Bason N."/>
            <person name="Farbrother P."/>
            <person name="Desany B."/>
            <person name="Just E."/>
            <person name="Morio T."/>
            <person name="Rost R."/>
            <person name="Churcher C.M."/>
            <person name="Cooper J."/>
            <person name="Haydock S."/>
            <person name="van Driessche N."/>
            <person name="Cronin A."/>
            <person name="Goodhead I."/>
            <person name="Muzny D.M."/>
            <person name="Mourier T."/>
            <person name="Pain A."/>
            <person name="Lu M."/>
            <person name="Harper D."/>
            <person name="Lindsay R."/>
            <person name="Hauser H."/>
            <person name="James K.D."/>
            <person name="Quiles M."/>
            <person name="Madan Babu M."/>
            <person name="Saito T."/>
            <person name="Buchrieser C."/>
            <person name="Wardroper A."/>
            <person name="Felder M."/>
            <person name="Thangavelu M."/>
            <person name="Johnson D."/>
            <person name="Knights A."/>
            <person name="Loulseged H."/>
            <person name="Mungall K.L."/>
            <person name="Oliver K."/>
            <person name="Price C."/>
            <person name="Quail M.A."/>
            <person name="Urushihara H."/>
            <person name="Hernandez J."/>
            <person name="Rabbinowitsch E."/>
            <person name="Steffen D."/>
            <person name="Sanders M."/>
            <person name="Ma J."/>
            <person name="Kohara Y."/>
            <person name="Sharp S."/>
            <person name="Simmonds M.N."/>
            <person name="Spiegler S."/>
            <person name="Tivey A."/>
            <person name="Sugano S."/>
            <person name="White B."/>
            <person name="Walker D."/>
            <person name="Woodward J.R."/>
            <person name="Winckler T."/>
            <person name="Tanaka Y."/>
            <person name="Shaulsky G."/>
            <person name="Schleicher M."/>
            <person name="Weinstock G.M."/>
            <person name="Rosenthal A."/>
            <person name="Cox E.C."/>
            <person name="Chisholm R.L."/>
            <person name="Gibbs R.A."/>
            <person name="Loomis W.F."/>
            <person name="Platzer M."/>
            <person name="Kay R.R."/>
            <person name="Williams J.G."/>
            <person name="Dear P.H."/>
            <person name="Noegel A.A."/>
            <person name="Barrell B.G."/>
            <person name="Kuspa A."/>
        </authorList>
    </citation>
    <scope>NUCLEOTIDE SEQUENCE [LARGE SCALE GENOMIC DNA]</scope>
    <source>
        <strain>AX4</strain>
    </source>
</reference>
<reference key="2">
    <citation type="journal article" date="2006" name="PLoS Genet.">
        <title>The dictyostelium kinome -- analysis of the protein kinases from a simple model organism.</title>
        <authorList>
            <person name="Goldberg J.M."/>
            <person name="Manning G."/>
            <person name="Liu A."/>
            <person name="Fey P."/>
            <person name="Pilcher K.E."/>
            <person name="Xu Y."/>
            <person name="Smith J.L."/>
        </authorList>
    </citation>
    <scope>GENE FAMILY</scope>
    <scope>NOMENCLATURE</scope>
</reference>
<comment type="similarity">
    <text evidence="3">Belongs to the protein kinase superfamily. AFK Ser/Thr protein kinase family.</text>
</comment>
<sequence length="409" mass="47695">MKTFRDFKKKIKNNNNNKNNKNNNINNNNSNNNKNNKNNNNNNSNNIYTPSISIIDNYDTLCSTPQNLKSNLKKNLNINNQEFITSNILEIDWNTIIDIEIIDFGNSIVCLLVTLSSDNLHFNQILIKSTPTIAQECYASVLQNILKLPILDLRLLEKNNEFLEMSSNLLDFSKDDQFLNDFIKSEFEKTFFLIMEFRQNGKKFNELNHKEYFSGYKGQEKFKQLGKIIAFDIFCNNFCKTNIAGDDSSIYFSNIICYETPNKNGWYFSLINSNISCLNNSLFTIGYRYHMNSLKLLLFSIFQNPSTESFQIRMMREHLLKKLNIKLPKSSAVYIQKGIAKGIKSIVNYINYPLLENTKDKVKNIVSCDNYNIWKKGIDSIHCPFLLDVLNEIEIEISNRREKVYFVKI</sequence>
<protein>
    <recommendedName>
        <fullName>Putative actin-fragmin kinase DDB_G0268812</fullName>
    </recommendedName>
</protein>
<gene>
    <name type="ORF">DDB_G0268812</name>
</gene>
<evidence type="ECO:0000255" key="1"/>
<evidence type="ECO:0000256" key="2">
    <source>
        <dbReference type="SAM" id="MobiDB-lite"/>
    </source>
</evidence>
<evidence type="ECO:0000305" key="3"/>